<evidence type="ECO:0000255" key="1">
    <source>
        <dbReference type="HAMAP-Rule" id="MF_00815"/>
    </source>
</evidence>
<comment type="function">
    <text>Produces ATP from ADP in the presence of a proton gradient across the membrane. The gamma chain is believed to be important in regulating ATPase activity and the flow of protons through the CF(0) complex.</text>
</comment>
<comment type="subunit">
    <text>F-type ATPases have 2 components, CF(1) - the catalytic core - and CF(0) - the membrane proton channel. CF(1) has five subunits: alpha(3), beta(3), gamma(1), delta(1), epsilon(1). CF(0) has three main subunits: a, b and c.</text>
</comment>
<comment type="subcellular location">
    <subcellularLocation>
        <location evidence="1">Cell membrane</location>
        <topology evidence="1">Peripheral membrane protein</topology>
    </subcellularLocation>
</comment>
<comment type="similarity">
    <text evidence="1">Belongs to the ATPase gamma chain family.</text>
</comment>
<feature type="chain" id="PRO_0000073256" description="ATP synthase gamma chain">
    <location>
        <begin position="1"/>
        <end position="291"/>
    </location>
</feature>
<proteinExistence type="inferred from homology"/>
<protein>
    <recommendedName>
        <fullName evidence="1">ATP synthase gamma chain</fullName>
    </recommendedName>
    <alternativeName>
        <fullName evidence="1">ATP synthase F1 sector gamma subunit</fullName>
    </alternativeName>
    <alternativeName>
        <fullName evidence="1">F-ATPase gamma subunit</fullName>
    </alternativeName>
</protein>
<keyword id="KW-0066">ATP synthesis</keyword>
<keyword id="KW-1003">Cell membrane</keyword>
<keyword id="KW-0139">CF(1)</keyword>
<keyword id="KW-0375">Hydrogen ion transport</keyword>
<keyword id="KW-0406">Ion transport</keyword>
<keyword id="KW-0472">Membrane</keyword>
<keyword id="KW-0813">Transport</keyword>
<accession>O51873</accession>
<name>ATPG_BUCAP</name>
<gene>
    <name evidence="1" type="primary">atpG</name>
    <name type="ordered locus">BUsg_007</name>
</gene>
<organism>
    <name type="scientific">Buchnera aphidicola subsp. Schizaphis graminum (strain Sg)</name>
    <dbReference type="NCBI Taxonomy" id="198804"/>
    <lineage>
        <taxon>Bacteria</taxon>
        <taxon>Pseudomonadati</taxon>
        <taxon>Pseudomonadota</taxon>
        <taxon>Gammaproteobacteria</taxon>
        <taxon>Enterobacterales</taxon>
        <taxon>Erwiniaceae</taxon>
        <taxon>Buchnera</taxon>
    </lineage>
</organism>
<dbReference type="EMBL" id="AF008210">
    <property type="protein sequence ID" value="AAC38111.1"/>
    <property type="molecule type" value="Genomic_DNA"/>
</dbReference>
<dbReference type="EMBL" id="AE013218">
    <property type="protein sequence ID" value="AAM67579.1"/>
    <property type="molecule type" value="Genomic_DNA"/>
</dbReference>
<dbReference type="RefSeq" id="WP_011053545.1">
    <property type="nucleotide sequence ID" value="NC_004061.1"/>
</dbReference>
<dbReference type="SMR" id="O51873"/>
<dbReference type="STRING" id="198804.BUsg_007"/>
<dbReference type="GeneID" id="93003469"/>
<dbReference type="KEGG" id="bas:BUsg_007"/>
<dbReference type="eggNOG" id="COG0224">
    <property type="taxonomic scope" value="Bacteria"/>
</dbReference>
<dbReference type="HOGENOM" id="CLU_050669_0_1_6"/>
<dbReference type="Proteomes" id="UP000000416">
    <property type="component" value="Chromosome"/>
</dbReference>
<dbReference type="GO" id="GO:0005886">
    <property type="term" value="C:plasma membrane"/>
    <property type="evidence" value="ECO:0007669"/>
    <property type="project" value="UniProtKB-SubCell"/>
</dbReference>
<dbReference type="GO" id="GO:0045259">
    <property type="term" value="C:proton-transporting ATP synthase complex"/>
    <property type="evidence" value="ECO:0007669"/>
    <property type="project" value="UniProtKB-KW"/>
</dbReference>
<dbReference type="GO" id="GO:0005524">
    <property type="term" value="F:ATP binding"/>
    <property type="evidence" value="ECO:0007669"/>
    <property type="project" value="UniProtKB-UniRule"/>
</dbReference>
<dbReference type="GO" id="GO:0046933">
    <property type="term" value="F:proton-transporting ATP synthase activity, rotational mechanism"/>
    <property type="evidence" value="ECO:0007669"/>
    <property type="project" value="UniProtKB-UniRule"/>
</dbReference>
<dbReference type="GO" id="GO:0042777">
    <property type="term" value="P:proton motive force-driven plasma membrane ATP synthesis"/>
    <property type="evidence" value="ECO:0007669"/>
    <property type="project" value="UniProtKB-UniRule"/>
</dbReference>
<dbReference type="CDD" id="cd12151">
    <property type="entry name" value="F1-ATPase_gamma"/>
    <property type="match status" value="1"/>
</dbReference>
<dbReference type="FunFam" id="1.10.287.80:FF:000005">
    <property type="entry name" value="ATP synthase gamma chain"/>
    <property type="match status" value="1"/>
</dbReference>
<dbReference type="Gene3D" id="3.40.1380.10">
    <property type="match status" value="1"/>
</dbReference>
<dbReference type="Gene3D" id="1.10.287.80">
    <property type="entry name" value="ATP synthase, gamma subunit, helix hairpin domain"/>
    <property type="match status" value="1"/>
</dbReference>
<dbReference type="HAMAP" id="MF_00815">
    <property type="entry name" value="ATP_synth_gamma_bact"/>
    <property type="match status" value="1"/>
</dbReference>
<dbReference type="InterPro" id="IPR035968">
    <property type="entry name" value="ATP_synth_F1_ATPase_gsu"/>
</dbReference>
<dbReference type="InterPro" id="IPR000131">
    <property type="entry name" value="ATP_synth_F1_gsu"/>
</dbReference>
<dbReference type="InterPro" id="IPR023632">
    <property type="entry name" value="ATP_synth_F1_gsu_CS"/>
</dbReference>
<dbReference type="NCBIfam" id="TIGR01146">
    <property type="entry name" value="ATPsyn_F1gamma"/>
    <property type="match status" value="1"/>
</dbReference>
<dbReference type="NCBIfam" id="NF004144">
    <property type="entry name" value="PRK05621.1-1"/>
    <property type="match status" value="1"/>
</dbReference>
<dbReference type="PANTHER" id="PTHR11693">
    <property type="entry name" value="ATP SYNTHASE GAMMA CHAIN"/>
    <property type="match status" value="1"/>
</dbReference>
<dbReference type="PANTHER" id="PTHR11693:SF22">
    <property type="entry name" value="ATP SYNTHASE SUBUNIT GAMMA, MITOCHONDRIAL"/>
    <property type="match status" value="1"/>
</dbReference>
<dbReference type="Pfam" id="PF00231">
    <property type="entry name" value="ATP-synt"/>
    <property type="match status" value="1"/>
</dbReference>
<dbReference type="PRINTS" id="PR00126">
    <property type="entry name" value="ATPASEGAMMA"/>
</dbReference>
<dbReference type="SUPFAM" id="SSF52943">
    <property type="entry name" value="ATP synthase (F1-ATPase), gamma subunit"/>
    <property type="match status" value="1"/>
</dbReference>
<dbReference type="PROSITE" id="PS00153">
    <property type="entry name" value="ATPASE_GAMMA"/>
    <property type="match status" value="1"/>
</dbReference>
<reference key="1">
    <citation type="journal article" date="1997" name="Curr. Microbiol.">
        <title>The (F1F0) ATP synthase of Buchnera aphidicola (endosymbiont of aphids): genetic analysis of the putative ATP operon.</title>
        <authorList>
            <person name="Clark M.A."/>
            <person name="Baumann P."/>
        </authorList>
    </citation>
    <scope>NUCLEOTIDE SEQUENCE [GENOMIC DNA]</scope>
</reference>
<reference key="2">
    <citation type="journal article" date="1998" name="Curr. Microbiol.">
        <title>Sequence analysis of a 34.7-kb DNA segment from the genome of Buchnera aphidicola (endosymbiont of aphids) containing groEL, dnaA, the atp operon, gidA, and rho.</title>
        <authorList>
            <person name="Clark M.A."/>
            <person name="Baumann L."/>
            <person name="Baumann P."/>
        </authorList>
    </citation>
    <scope>NUCLEOTIDE SEQUENCE [GENOMIC DNA]</scope>
</reference>
<reference key="3">
    <citation type="journal article" date="2002" name="Science">
        <title>50 million years of genomic stasis in endosymbiotic bacteria.</title>
        <authorList>
            <person name="Tamas I."/>
            <person name="Klasson L."/>
            <person name="Canbaeck B."/>
            <person name="Naeslund A.K."/>
            <person name="Eriksson A.-S."/>
            <person name="Wernegreen J.J."/>
            <person name="Sandstroem J.P."/>
            <person name="Moran N.A."/>
            <person name="Andersson S.G.E."/>
        </authorList>
    </citation>
    <scope>NUCLEOTIDE SEQUENCE [LARGE SCALE GENOMIC DNA]</scope>
    <source>
        <strain>Sg</strain>
    </source>
</reference>
<sequence>MASKKEIKDQIISVTNTKKITKAMEMVAVSKMRKTEERMRLGRPYSEIIKKVIHHVLQGSLEYKHSYLEKRNDKRIGIIIVSTDRGLCGSLNTNLFKQVLFKIQNFAKINIPCDLILFGLKSLSVFKLYGSSIISSVTNLGETPDLSKLIGSIKIILEKYQNNQIDRLFIAYNKFHNKLSQYPKISQLLPLYNEKNIFSNKKIKWDYLYEPESKLILDTLFDRYIESQIYQSLLENIASEQAARMVAMKTATDNSGNRIKELQLIYNKVRQANITQELTEIVAGASAVSVD</sequence>